<organism>
    <name type="scientific">Ruegeria sp. (strain TM1040)</name>
    <name type="common">Silicibacter sp.</name>
    <dbReference type="NCBI Taxonomy" id="292414"/>
    <lineage>
        <taxon>Bacteria</taxon>
        <taxon>Pseudomonadati</taxon>
        <taxon>Pseudomonadota</taxon>
        <taxon>Alphaproteobacteria</taxon>
        <taxon>Rhodobacterales</taxon>
        <taxon>Roseobacteraceae</taxon>
        <taxon>Ruegeria</taxon>
    </lineage>
</organism>
<protein>
    <recommendedName>
        <fullName evidence="1">Glycerol-3-phosphate dehydrogenase [NAD(P)+]</fullName>
        <ecNumber evidence="1">1.1.1.94</ecNumber>
    </recommendedName>
    <alternativeName>
        <fullName evidence="1">NAD(P)(+)-dependent glycerol-3-phosphate dehydrogenase</fullName>
    </alternativeName>
    <alternativeName>
        <fullName evidence="1">NAD(P)H-dependent dihydroxyacetone-phosphate reductase</fullName>
    </alternativeName>
</protein>
<keyword id="KW-0963">Cytoplasm</keyword>
<keyword id="KW-0444">Lipid biosynthesis</keyword>
<keyword id="KW-0443">Lipid metabolism</keyword>
<keyword id="KW-0520">NAD</keyword>
<keyword id="KW-0521">NADP</keyword>
<keyword id="KW-0547">Nucleotide-binding</keyword>
<keyword id="KW-0560">Oxidoreductase</keyword>
<keyword id="KW-0594">Phospholipid biosynthesis</keyword>
<keyword id="KW-1208">Phospholipid metabolism</keyword>
<keyword id="KW-1185">Reference proteome</keyword>
<feature type="chain" id="PRO_0000255372" description="Glycerol-3-phosphate dehydrogenase [NAD(P)+]">
    <location>
        <begin position="1"/>
        <end position="320"/>
    </location>
</feature>
<feature type="active site" description="Proton acceptor" evidence="1">
    <location>
        <position position="185"/>
    </location>
</feature>
<feature type="binding site" evidence="1">
    <location>
        <position position="11"/>
    </location>
    <ligand>
        <name>NADPH</name>
        <dbReference type="ChEBI" id="CHEBI:57783"/>
    </ligand>
</feature>
<feature type="binding site" evidence="1">
    <location>
        <position position="30"/>
    </location>
    <ligand>
        <name>NADPH</name>
        <dbReference type="ChEBI" id="CHEBI:57783"/>
    </ligand>
</feature>
<feature type="binding site" evidence="1">
    <location>
        <position position="102"/>
    </location>
    <ligand>
        <name>NADPH</name>
        <dbReference type="ChEBI" id="CHEBI:57783"/>
    </ligand>
</feature>
<feature type="binding site" evidence="1">
    <location>
        <position position="102"/>
    </location>
    <ligand>
        <name>sn-glycerol 3-phosphate</name>
        <dbReference type="ChEBI" id="CHEBI:57597"/>
    </ligand>
</feature>
<feature type="binding site" evidence="1">
    <location>
        <position position="130"/>
    </location>
    <ligand>
        <name>sn-glycerol 3-phosphate</name>
        <dbReference type="ChEBI" id="CHEBI:57597"/>
    </ligand>
</feature>
<feature type="binding site" evidence="1">
    <location>
        <position position="132"/>
    </location>
    <ligand>
        <name>sn-glycerol 3-phosphate</name>
        <dbReference type="ChEBI" id="CHEBI:57597"/>
    </ligand>
</feature>
<feature type="binding site" evidence="1">
    <location>
        <position position="134"/>
    </location>
    <ligand>
        <name>NADPH</name>
        <dbReference type="ChEBI" id="CHEBI:57783"/>
    </ligand>
</feature>
<feature type="binding site" evidence="1">
    <location>
        <position position="185"/>
    </location>
    <ligand>
        <name>sn-glycerol 3-phosphate</name>
        <dbReference type="ChEBI" id="CHEBI:57597"/>
    </ligand>
</feature>
<feature type="binding site" evidence="1">
    <location>
        <position position="238"/>
    </location>
    <ligand>
        <name>sn-glycerol 3-phosphate</name>
        <dbReference type="ChEBI" id="CHEBI:57597"/>
    </ligand>
</feature>
<feature type="binding site" evidence="1">
    <location>
        <position position="248"/>
    </location>
    <ligand>
        <name>sn-glycerol 3-phosphate</name>
        <dbReference type="ChEBI" id="CHEBI:57597"/>
    </ligand>
</feature>
<feature type="binding site" evidence="1">
    <location>
        <position position="249"/>
    </location>
    <ligand>
        <name>NADPH</name>
        <dbReference type="ChEBI" id="CHEBI:57783"/>
    </ligand>
</feature>
<feature type="binding site" evidence="1">
    <location>
        <position position="249"/>
    </location>
    <ligand>
        <name>sn-glycerol 3-phosphate</name>
        <dbReference type="ChEBI" id="CHEBI:57597"/>
    </ligand>
</feature>
<feature type="binding site" evidence="1">
    <location>
        <position position="250"/>
    </location>
    <ligand>
        <name>sn-glycerol 3-phosphate</name>
        <dbReference type="ChEBI" id="CHEBI:57597"/>
    </ligand>
</feature>
<feature type="binding site" evidence="1">
    <location>
        <position position="270"/>
    </location>
    <ligand>
        <name>NADPH</name>
        <dbReference type="ChEBI" id="CHEBI:57783"/>
    </ligand>
</feature>
<evidence type="ECO:0000255" key="1">
    <source>
        <dbReference type="HAMAP-Rule" id="MF_00394"/>
    </source>
</evidence>
<dbReference type="EC" id="1.1.1.94" evidence="1"/>
<dbReference type="EMBL" id="CP000377">
    <property type="protein sequence ID" value="ABF65562.1"/>
    <property type="molecule type" value="Genomic_DNA"/>
</dbReference>
<dbReference type="RefSeq" id="WP_011540144.1">
    <property type="nucleotide sequence ID" value="NC_008044.1"/>
</dbReference>
<dbReference type="SMR" id="Q1GCQ4"/>
<dbReference type="STRING" id="292414.TM1040_2830"/>
<dbReference type="KEGG" id="sit:TM1040_2830"/>
<dbReference type="eggNOG" id="COG0240">
    <property type="taxonomic scope" value="Bacteria"/>
</dbReference>
<dbReference type="HOGENOM" id="CLU_033449_0_2_5"/>
<dbReference type="OrthoDB" id="9812273at2"/>
<dbReference type="UniPathway" id="UPA00940"/>
<dbReference type="Proteomes" id="UP000000636">
    <property type="component" value="Chromosome"/>
</dbReference>
<dbReference type="GO" id="GO:0005829">
    <property type="term" value="C:cytosol"/>
    <property type="evidence" value="ECO:0007669"/>
    <property type="project" value="TreeGrafter"/>
</dbReference>
<dbReference type="GO" id="GO:0047952">
    <property type="term" value="F:glycerol-3-phosphate dehydrogenase [NAD(P)+] activity"/>
    <property type="evidence" value="ECO:0007669"/>
    <property type="project" value="UniProtKB-UniRule"/>
</dbReference>
<dbReference type="GO" id="GO:0051287">
    <property type="term" value="F:NAD binding"/>
    <property type="evidence" value="ECO:0007669"/>
    <property type="project" value="InterPro"/>
</dbReference>
<dbReference type="GO" id="GO:0005975">
    <property type="term" value="P:carbohydrate metabolic process"/>
    <property type="evidence" value="ECO:0007669"/>
    <property type="project" value="InterPro"/>
</dbReference>
<dbReference type="GO" id="GO:0046167">
    <property type="term" value="P:glycerol-3-phosphate biosynthetic process"/>
    <property type="evidence" value="ECO:0007669"/>
    <property type="project" value="UniProtKB-UniRule"/>
</dbReference>
<dbReference type="GO" id="GO:0046168">
    <property type="term" value="P:glycerol-3-phosphate catabolic process"/>
    <property type="evidence" value="ECO:0007669"/>
    <property type="project" value="InterPro"/>
</dbReference>
<dbReference type="GO" id="GO:0006650">
    <property type="term" value="P:glycerophospholipid metabolic process"/>
    <property type="evidence" value="ECO:0007669"/>
    <property type="project" value="UniProtKB-UniRule"/>
</dbReference>
<dbReference type="GO" id="GO:0008654">
    <property type="term" value="P:phospholipid biosynthetic process"/>
    <property type="evidence" value="ECO:0007669"/>
    <property type="project" value="UniProtKB-KW"/>
</dbReference>
<dbReference type="FunFam" id="3.40.50.720:FF:000019">
    <property type="entry name" value="Glycerol-3-phosphate dehydrogenase [NAD(P)+]"/>
    <property type="match status" value="1"/>
</dbReference>
<dbReference type="Gene3D" id="1.10.1040.10">
    <property type="entry name" value="N-(1-d-carboxylethyl)-l-norvaline Dehydrogenase, domain 2"/>
    <property type="match status" value="1"/>
</dbReference>
<dbReference type="Gene3D" id="3.40.50.720">
    <property type="entry name" value="NAD(P)-binding Rossmann-like Domain"/>
    <property type="match status" value="1"/>
</dbReference>
<dbReference type="HAMAP" id="MF_00394">
    <property type="entry name" value="NAD_Glyc3P_dehydrog"/>
    <property type="match status" value="1"/>
</dbReference>
<dbReference type="InterPro" id="IPR008927">
    <property type="entry name" value="6-PGluconate_DH-like_C_sf"/>
</dbReference>
<dbReference type="InterPro" id="IPR013328">
    <property type="entry name" value="6PGD_dom2"/>
</dbReference>
<dbReference type="InterPro" id="IPR006168">
    <property type="entry name" value="G3P_DH_NAD-dep"/>
</dbReference>
<dbReference type="InterPro" id="IPR006109">
    <property type="entry name" value="G3P_DH_NAD-dep_C"/>
</dbReference>
<dbReference type="InterPro" id="IPR011128">
    <property type="entry name" value="G3P_DH_NAD-dep_N"/>
</dbReference>
<dbReference type="InterPro" id="IPR036291">
    <property type="entry name" value="NAD(P)-bd_dom_sf"/>
</dbReference>
<dbReference type="NCBIfam" id="NF000940">
    <property type="entry name" value="PRK00094.1-2"/>
    <property type="match status" value="1"/>
</dbReference>
<dbReference type="NCBIfam" id="NF000942">
    <property type="entry name" value="PRK00094.1-4"/>
    <property type="match status" value="1"/>
</dbReference>
<dbReference type="PANTHER" id="PTHR11728">
    <property type="entry name" value="GLYCEROL-3-PHOSPHATE DEHYDROGENASE"/>
    <property type="match status" value="1"/>
</dbReference>
<dbReference type="PANTHER" id="PTHR11728:SF1">
    <property type="entry name" value="GLYCEROL-3-PHOSPHATE DEHYDROGENASE [NAD(+)] 2, CHLOROPLASTIC"/>
    <property type="match status" value="1"/>
</dbReference>
<dbReference type="Pfam" id="PF07479">
    <property type="entry name" value="NAD_Gly3P_dh_C"/>
    <property type="match status" value="1"/>
</dbReference>
<dbReference type="Pfam" id="PF01210">
    <property type="entry name" value="NAD_Gly3P_dh_N"/>
    <property type="match status" value="1"/>
</dbReference>
<dbReference type="PIRSF" id="PIRSF000114">
    <property type="entry name" value="Glycerol-3-P_dh"/>
    <property type="match status" value="1"/>
</dbReference>
<dbReference type="PRINTS" id="PR00077">
    <property type="entry name" value="GPDHDRGNASE"/>
</dbReference>
<dbReference type="SUPFAM" id="SSF48179">
    <property type="entry name" value="6-phosphogluconate dehydrogenase C-terminal domain-like"/>
    <property type="match status" value="1"/>
</dbReference>
<dbReference type="SUPFAM" id="SSF51735">
    <property type="entry name" value="NAD(P)-binding Rossmann-fold domains"/>
    <property type="match status" value="1"/>
</dbReference>
<dbReference type="PROSITE" id="PS00957">
    <property type="entry name" value="NAD_G3PDH"/>
    <property type="match status" value="1"/>
</dbReference>
<name>GPDA_RUEST</name>
<gene>
    <name evidence="1" type="primary">gpsA</name>
    <name type="ordered locus">TM1040_2830</name>
</gene>
<sequence>MSVAVLGAGAFGTALAISLARKAPTTLWCRSKDHADEIRSTRENTRRLPGAPLPDALAVTSDIACLGAHDVILLAVPMQKMRGFLTAHHAALSGKTLVACCKGIELDSGLGPVAVLRDTVPDATAALLTGPSFAADIALGLPTALTLACDPDETGKALQATLSTDNLRLYRTTDLTGAEIGGALKNVIAIACGAVIGARLGDSARAALMTRGYAEMQRLALARGARPETLAGLSGFGDLTLTCGSELSRNFRLGLSLGRGEAFDPSITVEGAATARATAKTAQEMGLEMPITQTVTNLLDQRLTISDAADQLLKRPLKEE</sequence>
<accession>Q1GCQ4</accession>
<reference key="1">
    <citation type="submission" date="2006-05" db="EMBL/GenBank/DDBJ databases">
        <title>Complete sequence of chromosome of Silicibacter sp. TM1040.</title>
        <authorList>
            <consortium name="US DOE Joint Genome Institute"/>
            <person name="Copeland A."/>
            <person name="Lucas S."/>
            <person name="Lapidus A."/>
            <person name="Barry K."/>
            <person name="Detter J.C."/>
            <person name="Glavina del Rio T."/>
            <person name="Hammon N."/>
            <person name="Israni S."/>
            <person name="Dalin E."/>
            <person name="Tice H."/>
            <person name="Pitluck S."/>
            <person name="Brettin T."/>
            <person name="Bruce D."/>
            <person name="Han C."/>
            <person name="Tapia R."/>
            <person name="Goodwin L."/>
            <person name="Thompson L.S."/>
            <person name="Gilna P."/>
            <person name="Schmutz J."/>
            <person name="Larimer F."/>
            <person name="Land M."/>
            <person name="Hauser L."/>
            <person name="Kyrpides N."/>
            <person name="Kim E."/>
            <person name="Belas R."/>
            <person name="Moran M.A."/>
            <person name="Buchan A."/>
            <person name="Gonzalez J.M."/>
            <person name="Schell M.A."/>
            <person name="Sun F."/>
            <person name="Richardson P."/>
        </authorList>
    </citation>
    <scope>NUCLEOTIDE SEQUENCE [LARGE SCALE GENOMIC DNA]</scope>
    <source>
        <strain>TM1040</strain>
    </source>
</reference>
<comment type="function">
    <text evidence="1">Catalyzes the reduction of the glycolytic intermediate dihydroxyacetone phosphate (DHAP) to sn-glycerol 3-phosphate (G3P), the key precursor for phospholipid synthesis.</text>
</comment>
<comment type="catalytic activity">
    <reaction evidence="1">
        <text>sn-glycerol 3-phosphate + NAD(+) = dihydroxyacetone phosphate + NADH + H(+)</text>
        <dbReference type="Rhea" id="RHEA:11092"/>
        <dbReference type="ChEBI" id="CHEBI:15378"/>
        <dbReference type="ChEBI" id="CHEBI:57540"/>
        <dbReference type="ChEBI" id="CHEBI:57597"/>
        <dbReference type="ChEBI" id="CHEBI:57642"/>
        <dbReference type="ChEBI" id="CHEBI:57945"/>
        <dbReference type="EC" id="1.1.1.94"/>
    </reaction>
    <physiologicalReaction direction="right-to-left" evidence="1">
        <dbReference type="Rhea" id="RHEA:11094"/>
    </physiologicalReaction>
</comment>
<comment type="catalytic activity">
    <reaction evidence="1">
        <text>sn-glycerol 3-phosphate + NADP(+) = dihydroxyacetone phosphate + NADPH + H(+)</text>
        <dbReference type="Rhea" id="RHEA:11096"/>
        <dbReference type="ChEBI" id="CHEBI:15378"/>
        <dbReference type="ChEBI" id="CHEBI:57597"/>
        <dbReference type="ChEBI" id="CHEBI:57642"/>
        <dbReference type="ChEBI" id="CHEBI:57783"/>
        <dbReference type="ChEBI" id="CHEBI:58349"/>
        <dbReference type="EC" id="1.1.1.94"/>
    </reaction>
    <physiologicalReaction direction="right-to-left" evidence="1">
        <dbReference type="Rhea" id="RHEA:11098"/>
    </physiologicalReaction>
</comment>
<comment type="pathway">
    <text evidence="1">Membrane lipid metabolism; glycerophospholipid metabolism.</text>
</comment>
<comment type="subcellular location">
    <subcellularLocation>
        <location evidence="1">Cytoplasm</location>
    </subcellularLocation>
</comment>
<comment type="similarity">
    <text evidence="1">Belongs to the NAD-dependent glycerol-3-phosphate dehydrogenase family.</text>
</comment>
<proteinExistence type="inferred from homology"/>